<proteinExistence type="evidence at protein level"/>
<comment type="function">
    <text evidence="1">Brain specific sodium (and chloride)-dependent proline transporter. Terminates the action of proline by its high affinity sodium-dependent reuptake into presynaptic terminals.</text>
</comment>
<comment type="catalytic activity">
    <reaction evidence="1">
        <text>L-proline(out) + chloride(out) + 2 Na(+)(out) = L-proline(in) + chloride(in) + 2 Na(+)(in)</text>
        <dbReference type="Rhea" id="RHEA:71263"/>
        <dbReference type="ChEBI" id="CHEBI:17996"/>
        <dbReference type="ChEBI" id="CHEBI:29101"/>
        <dbReference type="ChEBI" id="CHEBI:60039"/>
    </reaction>
</comment>
<comment type="catalytic activity">
    <reaction evidence="1">
        <text>L-pipecolate(out) + chloride(out) + 2 Na(+)(out) = L-pipecolate(in) + chloride(in) + 2 Na(+)(in)</text>
        <dbReference type="Rhea" id="RHEA:71267"/>
        <dbReference type="ChEBI" id="CHEBI:17996"/>
        <dbReference type="ChEBI" id="CHEBI:29101"/>
        <dbReference type="ChEBI" id="CHEBI:61185"/>
    </reaction>
</comment>
<comment type="subcellular location">
    <subcellularLocation>
        <location evidence="2">Synaptic cell membrane</location>
        <topology evidence="3">Multi-pass membrane protein</topology>
    </subcellularLocation>
</comment>
<comment type="similarity">
    <text evidence="4">Belongs to the sodium:neurotransmitter symporter (SNF) (TC 2.A.22) family. SLC6A7 subfamily.</text>
</comment>
<gene>
    <name evidence="6 7" type="primary">Slc6a7</name>
</gene>
<sequence>MKKLQEAHLRKPITPDLLMTPSDQGDVDLDVDFAADRGNWTGKLDFLLSCIGYCVGLGNVWRFPYRAYTNGGGAFLVPYFLMLAICGIPLFFLELSLGQFSSLGPLAVWKISPLFKGAGAAMLLIVGLVAIYYNMIIAYVLFYLFASLTSNLPWEHCGNWWNTELCLEHRGPKSGNGVLPLNLSSTVSPSEEYWSRYVLHIQGSQGIGRPGEIRWNLCLCLLLAWVIVFLCILKGVKSSGKVVYFTATFPYLILLMLLVRGVTLPGAWKGIQFYLTPQFHHLLSSKVWIEAALQIFYSLGVGFGGLLTFASYNTFHQNIYRDTFIVTLGNAITSILAGFAIFSVLGYMSQELGVPVDQVAKAGPGLAFVVYPQAMTMLPLSPFWSFLFFFMLLTLGLDSQFAFLETIVTAVTDEFPYYLRPKKAVFSGLICVAMYLMGLILTTDGGMYWLVLLDDYSASFGLMVVVITTCLAVTRVYGIQRFCRDIHMMLGFKPGLYFRACWLFLSPATLLALLVYSIVKYQPSEYGSYRFPAWAELLGILMGLLSCLMIPAGMLVAVLREEGSLWERLQQASRPAMDWGPSLEENRTGMYVATLAGSQSPKPLMVHMRKYGGITSFENTAIEVDREIAEEEEESMM</sequence>
<organism>
    <name type="scientific">Mus musculus</name>
    <name type="common">Mouse</name>
    <dbReference type="NCBI Taxonomy" id="10090"/>
    <lineage>
        <taxon>Eukaryota</taxon>
        <taxon>Metazoa</taxon>
        <taxon>Chordata</taxon>
        <taxon>Craniata</taxon>
        <taxon>Vertebrata</taxon>
        <taxon>Euteleostomi</taxon>
        <taxon>Mammalia</taxon>
        <taxon>Eutheria</taxon>
        <taxon>Euarchontoglires</taxon>
        <taxon>Glires</taxon>
        <taxon>Rodentia</taxon>
        <taxon>Myomorpha</taxon>
        <taxon>Muroidea</taxon>
        <taxon>Muridae</taxon>
        <taxon>Murinae</taxon>
        <taxon>Mus</taxon>
        <taxon>Mus</taxon>
    </lineage>
</organism>
<evidence type="ECO:0000250" key="1">
    <source>
        <dbReference type="UniProtKB" id="P28573"/>
    </source>
</evidence>
<evidence type="ECO:0000250" key="2">
    <source>
        <dbReference type="UniProtKB" id="Q99884"/>
    </source>
</evidence>
<evidence type="ECO:0000255" key="3"/>
<evidence type="ECO:0000305" key="4"/>
<evidence type="ECO:0000312" key="5">
    <source>
        <dbReference type="EMBL" id="AAH50103.1"/>
    </source>
</evidence>
<evidence type="ECO:0000312" key="6">
    <source>
        <dbReference type="EMBL" id="AAH57070.1"/>
    </source>
</evidence>
<evidence type="ECO:0000312" key="7">
    <source>
        <dbReference type="MGI" id="MGI:2147363"/>
    </source>
</evidence>
<evidence type="ECO:0007744" key="8">
    <source>
    </source>
</evidence>
<protein>
    <recommendedName>
        <fullName>Sodium-dependent proline transporter</fullName>
    </recommendedName>
    <alternativeName>
        <fullName>Solute carrier family 6 member 7</fullName>
    </alternativeName>
</protein>
<keyword id="KW-0029">Amino-acid transport</keyword>
<keyword id="KW-1003">Cell membrane</keyword>
<keyword id="KW-0325">Glycoprotein</keyword>
<keyword id="KW-0472">Membrane</keyword>
<keyword id="KW-0532">Neurotransmitter transport</keyword>
<keyword id="KW-0597">Phosphoprotein</keyword>
<keyword id="KW-1185">Reference proteome</keyword>
<keyword id="KW-0769">Symport</keyword>
<keyword id="KW-0770">Synapse</keyword>
<keyword id="KW-0812">Transmembrane</keyword>
<keyword id="KW-1133">Transmembrane helix</keyword>
<keyword id="KW-0813">Transport</keyword>
<dbReference type="EMBL" id="BC050103">
    <property type="protein sequence ID" value="AAH50103.1"/>
    <property type="molecule type" value="mRNA"/>
</dbReference>
<dbReference type="EMBL" id="BC057070">
    <property type="protein sequence ID" value="AAH57070.1"/>
    <property type="molecule type" value="mRNA"/>
</dbReference>
<dbReference type="CCDS" id="CCDS29278.1"/>
<dbReference type="RefSeq" id="NP_958741.1">
    <property type="nucleotide sequence ID" value="NM_201353.2"/>
</dbReference>
<dbReference type="SMR" id="Q6PGE7"/>
<dbReference type="FunCoup" id="Q6PGE7">
    <property type="interactions" value="79"/>
</dbReference>
<dbReference type="STRING" id="10090.ENSMUSP00000025520"/>
<dbReference type="GlyCosmos" id="Q6PGE7">
    <property type="glycosylation" value="1 site, No reported glycans"/>
</dbReference>
<dbReference type="GlyGen" id="Q6PGE7">
    <property type="glycosylation" value="2 sites, 1 N-linked glycan (1 site)"/>
</dbReference>
<dbReference type="iPTMnet" id="Q6PGE7"/>
<dbReference type="PhosphoSitePlus" id="Q6PGE7"/>
<dbReference type="PaxDb" id="10090-ENSMUSP00000025520"/>
<dbReference type="PeptideAtlas" id="Q6PGE7"/>
<dbReference type="ProteomicsDB" id="256739"/>
<dbReference type="Antibodypedia" id="27933">
    <property type="antibodies" value="78 antibodies from 17 providers"/>
</dbReference>
<dbReference type="DNASU" id="240332"/>
<dbReference type="Ensembl" id="ENSMUST00000025520.10">
    <property type="protein sequence ID" value="ENSMUSP00000025520.8"/>
    <property type="gene ID" value="ENSMUSG00000052026.9"/>
</dbReference>
<dbReference type="GeneID" id="240332"/>
<dbReference type="KEGG" id="mmu:240332"/>
<dbReference type="UCSC" id="uc008fbi.1">
    <property type="organism name" value="mouse"/>
</dbReference>
<dbReference type="AGR" id="MGI:2147363"/>
<dbReference type="CTD" id="6534"/>
<dbReference type="MGI" id="MGI:2147363">
    <property type="gene designation" value="Slc6a7"/>
</dbReference>
<dbReference type="VEuPathDB" id="HostDB:ENSMUSG00000052026"/>
<dbReference type="eggNOG" id="KOG3660">
    <property type="taxonomic scope" value="Eukaryota"/>
</dbReference>
<dbReference type="GeneTree" id="ENSGT00940000160823"/>
<dbReference type="HOGENOM" id="CLU_006855_9_4_1"/>
<dbReference type="InParanoid" id="Q6PGE7"/>
<dbReference type="OMA" id="RFPTWAE"/>
<dbReference type="OrthoDB" id="6581954at2759"/>
<dbReference type="PhylomeDB" id="Q6PGE7"/>
<dbReference type="TreeFam" id="TF343812"/>
<dbReference type="Reactome" id="R-MMU-442660">
    <property type="pathway name" value="Na+/Cl- dependent neurotransmitter transporters"/>
</dbReference>
<dbReference type="Reactome" id="R-MMU-71288">
    <property type="pathway name" value="Creatine metabolism"/>
</dbReference>
<dbReference type="BioGRID-ORCS" id="240332">
    <property type="hits" value="4 hits in 78 CRISPR screens"/>
</dbReference>
<dbReference type="ChiTaRS" id="Slc6a7">
    <property type="organism name" value="mouse"/>
</dbReference>
<dbReference type="PRO" id="PR:Q6PGE7"/>
<dbReference type="Proteomes" id="UP000000589">
    <property type="component" value="Chromosome 18"/>
</dbReference>
<dbReference type="RNAct" id="Q6PGE7">
    <property type="molecule type" value="protein"/>
</dbReference>
<dbReference type="Bgee" id="ENSMUSG00000052026">
    <property type="expression patterns" value="Expressed in subiculum and 102 other cell types or tissues"/>
</dbReference>
<dbReference type="GO" id="GO:0097060">
    <property type="term" value="C:synaptic membrane"/>
    <property type="evidence" value="ECO:0007669"/>
    <property type="project" value="UniProtKB-SubCell"/>
</dbReference>
<dbReference type="GO" id="GO:0015193">
    <property type="term" value="F:L-proline transmembrane transporter activity"/>
    <property type="evidence" value="ECO:0000314"/>
    <property type="project" value="MGI"/>
</dbReference>
<dbReference type="GO" id="GO:0005298">
    <property type="term" value="F:proline:sodium symporter activity"/>
    <property type="evidence" value="ECO:0000250"/>
    <property type="project" value="UniProtKB"/>
</dbReference>
<dbReference type="GO" id="GO:0006836">
    <property type="term" value="P:neurotransmitter transport"/>
    <property type="evidence" value="ECO:0007669"/>
    <property type="project" value="UniProtKB-KW"/>
</dbReference>
<dbReference type="GO" id="GO:0035524">
    <property type="term" value="P:proline transmembrane transport"/>
    <property type="evidence" value="ECO:0000314"/>
    <property type="project" value="MGI"/>
</dbReference>
<dbReference type="GO" id="GO:0015824">
    <property type="term" value="P:proline transport"/>
    <property type="evidence" value="ECO:0000250"/>
    <property type="project" value="UniProtKB"/>
</dbReference>
<dbReference type="GO" id="GO:0030163">
    <property type="term" value="P:protein catabolic process"/>
    <property type="evidence" value="ECO:0007669"/>
    <property type="project" value="Ensembl"/>
</dbReference>
<dbReference type="InterPro" id="IPR000175">
    <property type="entry name" value="Na/ntran_symport"/>
</dbReference>
<dbReference type="InterPro" id="IPR037272">
    <property type="entry name" value="SNS_sf"/>
</dbReference>
<dbReference type="PANTHER" id="PTHR11616:SF231">
    <property type="entry name" value="SODIUM-DEPENDENT PROLINE TRANSPORTER"/>
    <property type="match status" value="1"/>
</dbReference>
<dbReference type="PANTHER" id="PTHR11616">
    <property type="entry name" value="SODIUM/CHLORIDE DEPENDENT TRANSPORTER"/>
    <property type="match status" value="1"/>
</dbReference>
<dbReference type="Pfam" id="PF00209">
    <property type="entry name" value="SNF"/>
    <property type="match status" value="1"/>
</dbReference>
<dbReference type="PRINTS" id="PR00176">
    <property type="entry name" value="NANEUSMPORT"/>
</dbReference>
<dbReference type="SUPFAM" id="SSF161070">
    <property type="entry name" value="SNF-like"/>
    <property type="match status" value="1"/>
</dbReference>
<dbReference type="PROSITE" id="PS00610">
    <property type="entry name" value="NA_NEUROTRAN_SYMP_1"/>
    <property type="match status" value="1"/>
</dbReference>
<dbReference type="PROSITE" id="PS00754">
    <property type="entry name" value="NA_NEUROTRAN_SYMP_2"/>
    <property type="match status" value="1"/>
</dbReference>
<dbReference type="PROSITE" id="PS50267">
    <property type="entry name" value="NA_NEUROTRAN_SYMP_3"/>
    <property type="match status" value="1"/>
</dbReference>
<accession>Q6PGE7</accession>
<accession>Q80UM1</accession>
<feature type="chain" id="PRO_0000214771" description="Sodium-dependent proline transporter">
    <location>
        <begin position="1"/>
        <end position="637"/>
    </location>
</feature>
<feature type="topological domain" description="Cytoplasmic" evidence="3">
    <location>
        <begin position="1"/>
        <end position="45"/>
    </location>
</feature>
<feature type="transmembrane region" description="Helical; Name=1" evidence="3">
    <location>
        <begin position="46"/>
        <end position="66"/>
    </location>
</feature>
<feature type="transmembrane region" description="Helical; Name=2" evidence="3">
    <location>
        <begin position="74"/>
        <end position="93"/>
    </location>
</feature>
<feature type="transmembrane region" description="Helical; Name=3" evidence="3">
    <location>
        <begin position="117"/>
        <end position="137"/>
    </location>
</feature>
<feature type="topological domain" description="Extracellular" evidence="3">
    <location>
        <begin position="138"/>
        <end position="214"/>
    </location>
</feature>
<feature type="transmembrane region" description="Helical; Name=4" evidence="3">
    <location>
        <begin position="215"/>
        <end position="233"/>
    </location>
</feature>
<feature type="transmembrane region" description="Helical; Name=5" evidence="3">
    <location>
        <begin position="242"/>
        <end position="259"/>
    </location>
</feature>
<feature type="transmembrane region" description="Helical; Name=6" evidence="3">
    <location>
        <begin position="295"/>
        <end position="312"/>
    </location>
</feature>
<feature type="transmembrane region" description="Helical; Name=7" evidence="3">
    <location>
        <begin position="324"/>
        <end position="345"/>
    </location>
</feature>
<feature type="transmembrane region" description="Helical; Name=8" evidence="3">
    <location>
        <begin position="378"/>
        <end position="397"/>
    </location>
</feature>
<feature type="transmembrane region" description="Helical; Name=9" evidence="3">
    <location>
        <begin position="425"/>
        <end position="443"/>
    </location>
</feature>
<feature type="transmembrane region" description="Helical; Name=10" evidence="3">
    <location>
        <begin position="459"/>
        <end position="479"/>
    </location>
</feature>
<feature type="transmembrane region" description="Helical; Name=11" evidence="3">
    <location>
        <begin position="500"/>
        <end position="519"/>
    </location>
</feature>
<feature type="transmembrane region" description="Helical; Name=12" evidence="3">
    <location>
        <begin position="538"/>
        <end position="556"/>
    </location>
</feature>
<feature type="topological domain" description="Cytoplasmic" evidence="3">
    <location>
        <begin position="557"/>
        <end position="637"/>
    </location>
</feature>
<feature type="modified residue" description="Phosphothreonine" evidence="8">
    <location>
        <position position="20"/>
    </location>
</feature>
<feature type="modified residue" description="Phosphoserine" evidence="8">
    <location>
        <position position="22"/>
    </location>
</feature>
<feature type="modified residue" description="Phosphoserine" evidence="1">
    <location>
        <position position="573"/>
    </location>
</feature>
<feature type="modified residue" description="Phosphoserine" evidence="1">
    <location>
        <position position="582"/>
    </location>
</feature>
<feature type="modified residue" description="Phosphothreonine" evidence="1">
    <location>
        <position position="588"/>
    </location>
</feature>
<feature type="modified residue" description="Phosphotyrosine" evidence="1">
    <location>
        <position position="591"/>
    </location>
</feature>
<feature type="modified residue" description="Phosphoserine" evidence="8">
    <location>
        <position position="598"/>
    </location>
</feature>
<feature type="modified residue" description="Phosphoserine" evidence="8">
    <location>
        <position position="600"/>
    </location>
</feature>
<feature type="glycosylation site" description="N-linked (GlcNAc...) asparagine" evidence="3">
    <location>
        <position position="182"/>
    </location>
</feature>
<feature type="sequence conflict" description="In Ref. 1; AAH50103." evidence="4" ref="1">
    <original>P</original>
    <variation>S</variation>
    <location>
        <position position="21"/>
    </location>
</feature>
<feature type="sequence conflict" description="In Ref. 1; AAH50103." evidence="4" ref="1">
    <original>Q</original>
    <variation>R</variation>
    <location>
        <position position="202"/>
    </location>
</feature>
<name>SC6A7_MOUSE</name>
<reference evidence="6" key="1">
    <citation type="journal article" date="2004" name="Genome Res.">
        <title>The status, quality, and expansion of the NIH full-length cDNA project: the Mammalian Gene Collection (MGC).</title>
        <authorList>
            <consortium name="The MGC Project Team"/>
        </authorList>
    </citation>
    <scope>NUCLEOTIDE SEQUENCE [LARGE SCALE MRNA]</scope>
    <source>
        <strain evidence="6">C57BL/6J</strain>
        <strain evidence="5">ICR</strain>
        <tissue evidence="6">Brain</tissue>
        <tissue>Trophoblast stem cell</tissue>
    </source>
</reference>
<reference key="2">
    <citation type="journal article" date="2010" name="Cell">
        <title>A tissue-specific atlas of mouse protein phosphorylation and expression.</title>
        <authorList>
            <person name="Huttlin E.L."/>
            <person name="Jedrychowski M.P."/>
            <person name="Elias J.E."/>
            <person name="Goswami T."/>
            <person name="Rad R."/>
            <person name="Beausoleil S.A."/>
            <person name="Villen J."/>
            <person name="Haas W."/>
            <person name="Sowa M.E."/>
            <person name="Gygi S.P."/>
        </authorList>
    </citation>
    <scope>PHOSPHORYLATION [LARGE SCALE ANALYSIS] AT THR-20; SER-22; SER-598 AND SER-600</scope>
    <scope>IDENTIFICATION BY MASS SPECTROMETRY [LARGE SCALE ANALYSIS]</scope>
    <source>
        <tissue>Brain</tissue>
    </source>
</reference>